<comment type="function">
    <text evidence="1">Binds 16S rRNA, required for the assembly of 30S particles and may also be responsible for determining the conformation of the 16S rRNA at the A site.</text>
</comment>
<comment type="subunit">
    <text evidence="1">Part of the 30S ribosomal subunit. Contacts proteins S3 and S10.</text>
</comment>
<comment type="similarity">
    <text evidence="1">Belongs to the universal ribosomal protein uS14 family.</text>
</comment>
<dbReference type="EMBL" id="CP000886">
    <property type="protein sequence ID" value="ABX69585.1"/>
    <property type="molecule type" value="Genomic_DNA"/>
</dbReference>
<dbReference type="RefSeq" id="WP_001118932.1">
    <property type="nucleotide sequence ID" value="NC_010102.1"/>
</dbReference>
<dbReference type="SMR" id="A9MSY5"/>
<dbReference type="GeneID" id="66757762"/>
<dbReference type="KEGG" id="spq:SPAB_04268"/>
<dbReference type="PATRIC" id="fig|1016998.12.peg.4014"/>
<dbReference type="HOGENOM" id="CLU_139869_0_1_6"/>
<dbReference type="BioCyc" id="SENT1016998:SPAB_RS17370-MONOMER"/>
<dbReference type="Proteomes" id="UP000008556">
    <property type="component" value="Chromosome"/>
</dbReference>
<dbReference type="GO" id="GO:0005737">
    <property type="term" value="C:cytoplasm"/>
    <property type="evidence" value="ECO:0007669"/>
    <property type="project" value="UniProtKB-ARBA"/>
</dbReference>
<dbReference type="GO" id="GO:0015935">
    <property type="term" value="C:small ribosomal subunit"/>
    <property type="evidence" value="ECO:0007669"/>
    <property type="project" value="TreeGrafter"/>
</dbReference>
<dbReference type="GO" id="GO:0019843">
    <property type="term" value="F:rRNA binding"/>
    <property type="evidence" value="ECO:0007669"/>
    <property type="project" value="UniProtKB-UniRule"/>
</dbReference>
<dbReference type="GO" id="GO:0003735">
    <property type="term" value="F:structural constituent of ribosome"/>
    <property type="evidence" value="ECO:0007669"/>
    <property type="project" value="InterPro"/>
</dbReference>
<dbReference type="GO" id="GO:0006412">
    <property type="term" value="P:translation"/>
    <property type="evidence" value="ECO:0007669"/>
    <property type="project" value="UniProtKB-UniRule"/>
</dbReference>
<dbReference type="FunFam" id="1.10.287.1480:FF:000001">
    <property type="entry name" value="30S ribosomal protein S14"/>
    <property type="match status" value="1"/>
</dbReference>
<dbReference type="Gene3D" id="1.10.287.1480">
    <property type="match status" value="1"/>
</dbReference>
<dbReference type="HAMAP" id="MF_00537">
    <property type="entry name" value="Ribosomal_uS14_1"/>
    <property type="match status" value="1"/>
</dbReference>
<dbReference type="InterPro" id="IPR001209">
    <property type="entry name" value="Ribosomal_uS14"/>
</dbReference>
<dbReference type="InterPro" id="IPR023036">
    <property type="entry name" value="Ribosomal_uS14_bac/plastid"/>
</dbReference>
<dbReference type="InterPro" id="IPR018271">
    <property type="entry name" value="Ribosomal_uS14_CS"/>
</dbReference>
<dbReference type="NCBIfam" id="NF006477">
    <property type="entry name" value="PRK08881.1"/>
    <property type="match status" value="1"/>
</dbReference>
<dbReference type="PANTHER" id="PTHR19836">
    <property type="entry name" value="30S RIBOSOMAL PROTEIN S14"/>
    <property type="match status" value="1"/>
</dbReference>
<dbReference type="PANTHER" id="PTHR19836:SF19">
    <property type="entry name" value="SMALL RIBOSOMAL SUBUNIT PROTEIN US14M"/>
    <property type="match status" value="1"/>
</dbReference>
<dbReference type="Pfam" id="PF00253">
    <property type="entry name" value="Ribosomal_S14"/>
    <property type="match status" value="1"/>
</dbReference>
<dbReference type="SUPFAM" id="SSF57716">
    <property type="entry name" value="Glucocorticoid receptor-like (DNA-binding domain)"/>
    <property type="match status" value="1"/>
</dbReference>
<dbReference type="PROSITE" id="PS00527">
    <property type="entry name" value="RIBOSOMAL_S14"/>
    <property type="match status" value="1"/>
</dbReference>
<gene>
    <name evidence="1" type="primary">rpsN</name>
    <name type="ordered locus">SPAB_04268</name>
</gene>
<evidence type="ECO:0000255" key="1">
    <source>
        <dbReference type="HAMAP-Rule" id="MF_00537"/>
    </source>
</evidence>
<evidence type="ECO:0000305" key="2"/>
<accession>A9MSY5</accession>
<reference key="1">
    <citation type="submission" date="2007-11" db="EMBL/GenBank/DDBJ databases">
        <authorList>
            <consortium name="The Salmonella enterica serovar Paratyphi B Genome Sequencing Project"/>
            <person name="McClelland M."/>
            <person name="Sanderson E.K."/>
            <person name="Porwollik S."/>
            <person name="Spieth J."/>
            <person name="Clifton W.S."/>
            <person name="Fulton R."/>
            <person name="Cordes M."/>
            <person name="Wollam A."/>
            <person name="Shah N."/>
            <person name="Pepin K."/>
            <person name="Bhonagiri V."/>
            <person name="Nash W."/>
            <person name="Johnson M."/>
            <person name="Thiruvilangam P."/>
            <person name="Wilson R."/>
        </authorList>
    </citation>
    <scope>NUCLEOTIDE SEQUENCE [LARGE SCALE GENOMIC DNA]</scope>
    <source>
        <strain>ATCC BAA-1250 / SPB7</strain>
    </source>
</reference>
<name>RS14_SALPB</name>
<organism>
    <name type="scientific">Salmonella paratyphi B (strain ATCC BAA-1250 / SPB7)</name>
    <dbReference type="NCBI Taxonomy" id="1016998"/>
    <lineage>
        <taxon>Bacteria</taxon>
        <taxon>Pseudomonadati</taxon>
        <taxon>Pseudomonadota</taxon>
        <taxon>Gammaproteobacteria</taxon>
        <taxon>Enterobacterales</taxon>
        <taxon>Enterobacteriaceae</taxon>
        <taxon>Salmonella</taxon>
    </lineage>
</organism>
<keyword id="KW-0687">Ribonucleoprotein</keyword>
<keyword id="KW-0689">Ribosomal protein</keyword>
<keyword id="KW-0694">RNA-binding</keyword>
<keyword id="KW-0699">rRNA-binding</keyword>
<sequence>MAKQSMKAREVKRVALADKYFAKRAELKAIISDVNATDEDRWNAVLKLQTLPRDSSPSRQRNRCRQTGRPHAFLRKFGLSRIKVREAAMRGEIPGLKKASW</sequence>
<protein>
    <recommendedName>
        <fullName evidence="1">Small ribosomal subunit protein uS14</fullName>
    </recommendedName>
    <alternativeName>
        <fullName evidence="2">30S ribosomal protein S14</fullName>
    </alternativeName>
</protein>
<feature type="chain" id="PRO_1000128563" description="Small ribosomal subunit protein uS14">
    <location>
        <begin position="1"/>
        <end position="101"/>
    </location>
</feature>
<proteinExistence type="inferred from homology"/>